<gene>
    <name evidence="6" type="primary">abcE</name>
    <name type="ORF">AFUA_7G00480</name>
</gene>
<evidence type="ECO:0000255" key="1"/>
<evidence type="ECO:0000255" key="2">
    <source>
        <dbReference type="PROSITE-ProRule" id="PRU00434"/>
    </source>
</evidence>
<evidence type="ECO:0000255" key="3">
    <source>
        <dbReference type="PROSITE-ProRule" id="PRU00441"/>
    </source>
</evidence>
<evidence type="ECO:0000255" key="4">
    <source>
        <dbReference type="PROSITE-ProRule" id="PRU00498"/>
    </source>
</evidence>
<evidence type="ECO:0000269" key="5">
    <source>
    </source>
</evidence>
<evidence type="ECO:0000303" key="6">
    <source>
    </source>
</evidence>
<evidence type="ECO:0000305" key="7"/>
<evidence type="ECO:0000305" key="8">
    <source>
    </source>
</evidence>
<accession>Q4WA92</accession>
<sequence>MALQQVRPTNKQCRKNKKRAKAKMMESPRRLCRWAIISYEGSPRIACNATDETAESPFLRNRERSSCINRGFDISYCVRCAFTPDEHCVWEPCCAIQSVRQQVEVGTSKRTMDIYSPLQFCFRVTGLRVSAVIRLEYVQALFSQPISKVDQVSVGTVTNTITTLSNTIQQSISDKLAILFQSLALLLAAFIIAFKYSWALTLVTSSALLFVVVGCSVTLPFMTKIQQKIDKADEKHSSIAAEVFGSIRTVISLGAQESLSKRYTTWVEEARKRGNGLSLIFGIHFALVFFALYASFSLAFWFGLKLYREGHIGEINTVITVFFSVMIVVSVLGNIASPLIIVSKAASAAGSFFELIDSEKVDSGGLREPDASAHVDIIFRDVRFTYPTRPDVPVLKGLDIRFQNGKTTALVGPSGSGKSTIVALIERWYQLAMSPEDQNQGSIYVGPHDINSLDLKWWRSQIGLVQQEPFLFNDTIFNNVAFGLIGTQWEKEPDSVKKELIEKACREAFAEEFIQRLPEGYATIVGQNGIKLSGGQRQRLAIARSIVKEPKILILDEATSAIDVRGEKIVQAALDRVSRNRTTIMIAHRLSTIRRADHIVVMKGGVNVEEGTHEELLQREGGVYRDLVNAQRLELLAEEDSHTGNAVLELQDEAQSPTMSVQEKLQDEDNTQDKNRGFIRTIGLVLYEQRARWPLYVAVLISTAGAGTAFPLQSWLFAKLIEVFRFTGQKLVDAANFWALMFFLLALAVGVLYSTVGFTANSLSVRISEACRKEYFQNILAKPIPFHDLSENASGSIVSRLATDPKQVQELIGLNGAFPLISTFSMIGCIAIAFSFGWKLSLVTVFAALPCTFLAAFMRIRYELQFEAMNAAVYAGSSQFAAEAIDAFRTVSSLTMEDAILDRYTQLLREQQKKAFRKARYATLIFAFSDSVELCAMALTFWYGGQLLASREYQPTSFFVIFMAIIQGGQSAGQFFSFASNFAQAAASANRILNSRPQSDELGAASIEKQQLVRSGDLTGATVEFHDVSFRYASQDVPLFTGLNVSIQSGQFVAFVGPSGCGKTTVISLLERFYSPSQGTITFNGEDIRTLEMTSYRRELSLVAQEPRLFEGSIRENITLGLDQSEFTEEELIQACKDAEIHDFITSLPEGYATELGIKAQTSLSGGQRQRLCIARALLRKPSLLLLDEATSSLDSQSEKVVQGAMERLAQKRSLTIVAVAHRLATIQKADTIYVFGTAHAGQASRIVEQGTHQELLRAKGTYWQMVSSPRFLT</sequence>
<dbReference type="EMBL" id="AAHF01000015">
    <property type="protein sequence ID" value="EAL84844.1"/>
    <property type="molecule type" value="Genomic_DNA"/>
</dbReference>
<dbReference type="RefSeq" id="XP_746882.1">
    <property type="nucleotide sequence ID" value="XM_741789.1"/>
</dbReference>
<dbReference type="SMR" id="Q4WA92"/>
<dbReference type="STRING" id="330879.Q4WA92"/>
<dbReference type="GlyCosmos" id="Q4WA92">
    <property type="glycosylation" value="6 sites, No reported glycans"/>
</dbReference>
<dbReference type="EnsemblFungi" id="EAL84844">
    <property type="protein sequence ID" value="EAL84844"/>
    <property type="gene ID" value="AFUA_7G00480"/>
</dbReference>
<dbReference type="GeneID" id="3504327"/>
<dbReference type="KEGG" id="afm:AFUA_7G00480"/>
<dbReference type="eggNOG" id="KOG0055">
    <property type="taxonomic scope" value="Eukaryota"/>
</dbReference>
<dbReference type="HOGENOM" id="CLU_000604_17_8_1"/>
<dbReference type="InParanoid" id="Q4WA92"/>
<dbReference type="OMA" id="YRMFLGT"/>
<dbReference type="OrthoDB" id="6500128at2759"/>
<dbReference type="Proteomes" id="UP000002530">
    <property type="component" value="Chromosome 7"/>
</dbReference>
<dbReference type="GO" id="GO:0016020">
    <property type="term" value="C:membrane"/>
    <property type="evidence" value="ECO:0000318"/>
    <property type="project" value="GO_Central"/>
</dbReference>
<dbReference type="GO" id="GO:0005886">
    <property type="term" value="C:plasma membrane"/>
    <property type="evidence" value="ECO:0007669"/>
    <property type="project" value="UniProtKB-SubCell"/>
</dbReference>
<dbReference type="GO" id="GO:0140359">
    <property type="term" value="F:ABC-type transporter activity"/>
    <property type="evidence" value="ECO:0007669"/>
    <property type="project" value="InterPro"/>
</dbReference>
<dbReference type="GO" id="GO:0005524">
    <property type="term" value="F:ATP binding"/>
    <property type="evidence" value="ECO:0007669"/>
    <property type="project" value="UniProtKB-KW"/>
</dbReference>
<dbReference type="GO" id="GO:0016887">
    <property type="term" value="F:ATP hydrolysis activity"/>
    <property type="evidence" value="ECO:0007669"/>
    <property type="project" value="InterPro"/>
</dbReference>
<dbReference type="GO" id="GO:0042626">
    <property type="term" value="F:ATPase-coupled transmembrane transporter activity"/>
    <property type="evidence" value="ECO:0000318"/>
    <property type="project" value="GO_Central"/>
</dbReference>
<dbReference type="GO" id="GO:0055085">
    <property type="term" value="P:transmembrane transport"/>
    <property type="evidence" value="ECO:0000318"/>
    <property type="project" value="GO_Central"/>
</dbReference>
<dbReference type="CDD" id="cd18577">
    <property type="entry name" value="ABC_6TM_Pgp_ABCB1_D1_like"/>
    <property type="match status" value="1"/>
</dbReference>
<dbReference type="CDD" id="cd18578">
    <property type="entry name" value="ABC_6TM_Pgp_ABCB1_D2_like"/>
    <property type="match status" value="1"/>
</dbReference>
<dbReference type="CDD" id="cd03249">
    <property type="entry name" value="ABC_MTABC3_MDL1_MDL2"/>
    <property type="match status" value="1"/>
</dbReference>
<dbReference type="FunFam" id="3.40.50.300:FF:001530">
    <property type="entry name" value="ABC multidrug transporter (Eurofung)"/>
    <property type="match status" value="1"/>
</dbReference>
<dbReference type="FunFam" id="1.20.1560.10:FF:000057">
    <property type="entry name" value="ABC multidrug transporter SitT"/>
    <property type="match status" value="1"/>
</dbReference>
<dbReference type="FunFam" id="3.40.50.300:FF:000913">
    <property type="entry name" value="ABC multidrug transporter SitT"/>
    <property type="match status" value="1"/>
</dbReference>
<dbReference type="Gene3D" id="1.20.1560.10">
    <property type="entry name" value="ABC transporter type 1, transmembrane domain"/>
    <property type="match status" value="1"/>
</dbReference>
<dbReference type="Gene3D" id="3.40.50.300">
    <property type="entry name" value="P-loop containing nucleotide triphosphate hydrolases"/>
    <property type="match status" value="2"/>
</dbReference>
<dbReference type="InterPro" id="IPR003593">
    <property type="entry name" value="AAA+_ATPase"/>
</dbReference>
<dbReference type="InterPro" id="IPR011527">
    <property type="entry name" value="ABC1_TM_dom"/>
</dbReference>
<dbReference type="InterPro" id="IPR036640">
    <property type="entry name" value="ABC1_TM_sf"/>
</dbReference>
<dbReference type="InterPro" id="IPR003439">
    <property type="entry name" value="ABC_transporter-like_ATP-bd"/>
</dbReference>
<dbReference type="InterPro" id="IPR017871">
    <property type="entry name" value="ABC_transporter-like_CS"/>
</dbReference>
<dbReference type="InterPro" id="IPR027417">
    <property type="entry name" value="P-loop_NTPase"/>
</dbReference>
<dbReference type="InterPro" id="IPR039421">
    <property type="entry name" value="Type_1_exporter"/>
</dbReference>
<dbReference type="PANTHER" id="PTHR24221:SF213">
    <property type="entry name" value="ABC MULTIDRUG TRANSPORTER (EUROFUNG)"/>
    <property type="match status" value="1"/>
</dbReference>
<dbReference type="PANTHER" id="PTHR24221">
    <property type="entry name" value="ATP-BINDING CASSETTE SUB-FAMILY B"/>
    <property type="match status" value="1"/>
</dbReference>
<dbReference type="Pfam" id="PF00664">
    <property type="entry name" value="ABC_membrane"/>
    <property type="match status" value="2"/>
</dbReference>
<dbReference type="Pfam" id="PF00005">
    <property type="entry name" value="ABC_tran"/>
    <property type="match status" value="2"/>
</dbReference>
<dbReference type="SMART" id="SM00382">
    <property type="entry name" value="AAA"/>
    <property type="match status" value="2"/>
</dbReference>
<dbReference type="SUPFAM" id="SSF90123">
    <property type="entry name" value="ABC transporter transmembrane region"/>
    <property type="match status" value="2"/>
</dbReference>
<dbReference type="SUPFAM" id="SSF52540">
    <property type="entry name" value="P-loop containing nucleoside triphosphate hydrolases"/>
    <property type="match status" value="2"/>
</dbReference>
<dbReference type="PROSITE" id="PS50929">
    <property type="entry name" value="ABC_TM1F"/>
    <property type="match status" value="2"/>
</dbReference>
<dbReference type="PROSITE" id="PS00211">
    <property type="entry name" value="ABC_TRANSPORTER_1"/>
    <property type="match status" value="2"/>
</dbReference>
<dbReference type="PROSITE" id="PS50893">
    <property type="entry name" value="ABC_TRANSPORTER_2"/>
    <property type="match status" value="2"/>
</dbReference>
<feature type="chain" id="PRO_0000445099" description="ABC multidrug transporter E">
    <location>
        <begin position="1"/>
        <end position="1274"/>
    </location>
</feature>
<feature type="transmembrane region" description="Helical" evidence="1 3">
    <location>
        <begin position="183"/>
        <end position="203"/>
    </location>
</feature>
<feature type="transmembrane region" description="Helical" evidence="1 3">
    <location>
        <begin position="205"/>
        <end position="225"/>
    </location>
</feature>
<feature type="transmembrane region" description="Helical" evidence="1 3">
    <location>
        <begin position="280"/>
        <end position="300"/>
    </location>
</feature>
<feature type="transmembrane region" description="Helical" evidence="1 3">
    <location>
        <begin position="321"/>
        <end position="341"/>
    </location>
</feature>
<feature type="transmembrane region" description="Helical" evidence="1 3">
    <location>
        <begin position="697"/>
        <end position="717"/>
    </location>
</feature>
<feature type="transmembrane region" description="Helical" evidence="1 3">
    <location>
        <begin position="737"/>
        <end position="757"/>
    </location>
</feature>
<feature type="transmembrane region" description="Helical" evidence="1 3">
    <location>
        <begin position="818"/>
        <end position="838"/>
    </location>
</feature>
<feature type="transmembrane region" description="Helical" evidence="1 3">
    <location>
        <begin position="840"/>
        <end position="860"/>
    </location>
</feature>
<feature type="transmembrane region" description="Helical" evidence="1 3">
    <location>
        <begin position="924"/>
        <end position="944"/>
    </location>
</feature>
<feature type="domain" description="ABC transmembrane type-1 1" evidence="3">
    <location>
        <begin position="120"/>
        <end position="344"/>
    </location>
</feature>
<feature type="domain" description="ABC transporter 1" evidence="2">
    <location>
        <begin position="377"/>
        <end position="629"/>
    </location>
</feature>
<feature type="domain" description="ABC transmembrane type-1 2" evidence="3">
    <location>
        <begin position="697"/>
        <end position="984"/>
    </location>
</feature>
<feature type="domain" description="ABC transporter 2" evidence="2">
    <location>
        <begin position="1023"/>
        <end position="1269"/>
    </location>
</feature>
<feature type="binding site" evidence="2">
    <location>
        <begin position="412"/>
        <end position="419"/>
    </location>
    <ligand>
        <name>ATP</name>
        <dbReference type="ChEBI" id="CHEBI:30616"/>
    </ligand>
</feature>
<feature type="binding site" evidence="2">
    <location>
        <begin position="1057"/>
        <end position="1064"/>
    </location>
    <ligand>
        <name>ATP</name>
        <dbReference type="ChEBI" id="CHEBI:30616"/>
    </ligand>
</feature>
<feature type="glycosylation site" description="N-linked (GlcNAc...) asparagine" evidence="4">
    <location>
        <position position="48"/>
    </location>
</feature>
<feature type="glycosylation site" description="N-linked (GlcNAc...) asparagine" evidence="4">
    <location>
        <position position="473"/>
    </location>
</feature>
<feature type="glycosylation site" description="N-linked (GlcNAc...) asparagine" evidence="4">
    <location>
        <position position="580"/>
    </location>
</feature>
<feature type="glycosylation site" description="N-linked (GlcNAc...) asparagine" evidence="4">
    <location>
        <position position="792"/>
    </location>
</feature>
<feature type="glycosylation site" description="N-linked (GlcNAc...) asparagine" evidence="4">
    <location>
        <position position="1044"/>
    </location>
</feature>
<feature type="glycosylation site" description="N-linked (GlcNAc...) asparagine" evidence="4">
    <location>
        <position position="1117"/>
    </location>
</feature>
<protein>
    <recommendedName>
        <fullName>ABC multidrug transporter E</fullName>
    </recommendedName>
</protein>
<keyword id="KW-0067">ATP-binding</keyword>
<keyword id="KW-1003">Cell membrane</keyword>
<keyword id="KW-0325">Glycoprotein</keyword>
<keyword id="KW-0472">Membrane</keyword>
<keyword id="KW-0547">Nucleotide-binding</keyword>
<keyword id="KW-1185">Reference proteome</keyword>
<keyword id="KW-0677">Repeat</keyword>
<keyword id="KW-0812">Transmembrane</keyword>
<keyword id="KW-1133">Transmembrane helix</keyword>
<keyword id="KW-0813">Transport</keyword>
<comment type="function">
    <text evidence="8">Pleiotropic ABC efflux transporter that may be involved in A.fumigatus adaptation to azoles such as vorizonazole.</text>
</comment>
<comment type="subcellular location">
    <subcellularLocation>
        <location evidence="7">Cell membrane</location>
        <topology evidence="1">Multi-pass membrane protein</topology>
    </subcellularLocation>
</comment>
<comment type="induction">
    <text evidence="5">Expression is induced upon voriconazole treatment.</text>
</comment>
<comment type="similarity">
    <text evidence="7">Belongs to the ABC transporter superfamily. ABCB family. Multidrug resistance exporter (TC 3.A.1.201) subfamily.</text>
</comment>
<name>ABCE_ASPFU</name>
<reference key="1">
    <citation type="journal article" date="2005" name="Nature">
        <title>Genomic sequence of the pathogenic and allergenic filamentous fungus Aspergillus fumigatus.</title>
        <authorList>
            <person name="Nierman W.C."/>
            <person name="Pain A."/>
            <person name="Anderson M.J."/>
            <person name="Wortman J.R."/>
            <person name="Kim H.S."/>
            <person name="Arroyo J."/>
            <person name="Berriman M."/>
            <person name="Abe K."/>
            <person name="Archer D.B."/>
            <person name="Bermejo C."/>
            <person name="Bennett J.W."/>
            <person name="Bowyer P."/>
            <person name="Chen D."/>
            <person name="Collins M."/>
            <person name="Coulsen R."/>
            <person name="Davies R."/>
            <person name="Dyer P.S."/>
            <person name="Farman M.L."/>
            <person name="Fedorova N."/>
            <person name="Fedorova N.D."/>
            <person name="Feldblyum T.V."/>
            <person name="Fischer R."/>
            <person name="Fosker N."/>
            <person name="Fraser A."/>
            <person name="Garcia J.L."/>
            <person name="Garcia M.J."/>
            <person name="Goble A."/>
            <person name="Goldman G.H."/>
            <person name="Gomi K."/>
            <person name="Griffith-Jones S."/>
            <person name="Gwilliam R."/>
            <person name="Haas B.J."/>
            <person name="Haas H."/>
            <person name="Harris D.E."/>
            <person name="Horiuchi H."/>
            <person name="Huang J."/>
            <person name="Humphray S."/>
            <person name="Jimenez J."/>
            <person name="Keller N."/>
            <person name="Khouri H."/>
            <person name="Kitamoto K."/>
            <person name="Kobayashi T."/>
            <person name="Konzack S."/>
            <person name="Kulkarni R."/>
            <person name="Kumagai T."/>
            <person name="Lafton A."/>
            <person name="Latge J.-P."/>
            <person name="Li W."/>
            <person name="Lord A."/>
            <person name="Lu C."/>
            <person name="Majoros W.H."/>
            <person name="May G.S."/>
            <person name="Miller B.L."/>
            <person name="Mohamoud Y."/>
            <person name="Molina M."/>
            <person name="Monod M."/>
            <person name="Mouyna I."/>
            <person name="Mulligan S."/>
            <person name="Murphy L.D."/>
            <person name="O'Neil S."/>
            <person name="Paulsen I."/>
            <person name="Penalva M.A."/>
            <person name="Pertea M."/>
            <person name="Price C."/>
            <person name="Pritchard B.L."/>
            <person name="Quail M.A."/>
            <person name="Rabbinowitsch E."/>
            <person name="Rawlins N."/>
            <person name="Rajandream M.A."/>
            <person name="Reichard U."/>
            <person name="Renauld H."/>
            <person name="Robson G.D."/>
            <person name="Rodriguez de Cordoba S."/>
            <person name="Rodriguez-Pena J.M."/>
            <person name="Ronning C.M."/>
            <person name="Rutter S."/>
            <person name="Salzberg S.L."/>
            <person name="Sanchez M."/>
            <person name="Sanchez-Ferrero J.C."/>
            <person name="Saunders D."/>
            <person name="Seeger K."/>
            <person name="Squares R."/>
            <person name="Squares S."/>
            <person name="Takeuchi M."/>
            <person name="Tekaia F."/>
            <person name="Turner G."/>
            <person name="Vazquez de Aldana C.R."/>
            <person name="Weidman J."/>
            <person name="White O."/>
            <person name="Woodward J.R."/>
            <person name="Yu J.-H."/>
            <person name="Fraser C.M."/>
            <person name="Galagan J.E."/>
            <person name="Asai K."/>
            <person name="Machida M."/>
            <person name="Hall N."/>
            <person name="Barrell B.G."/>
            <person name="Denning D.W."/>
        </authorList>
    </citation>
    <scope>NUCLEOTIDE SEQUENCE [LARGE SCALE GENOMIC DNA]</scope>
    <source>
        <strain>ATCC MYA-4609 / CBS 101355 / FGSC A1100 / Af293</strain>
    </source>
</reference>
<reference key="2">
    <citation type="journal article" date="2006" name="Curr. Genet.">
        <title>Transcriptome analysis of Aspergillus fumigatus exposed to voriconazole.</title>
        <authorList>
            <person name="da Silva Ferreira M.E."/>
            <person name="Malavazi I."/>
            <person name="Savoldi M."/>
            <person name="Brakhage A.A."/>
            <person name="Goldman M.H."/>
            <person name="Kim H.S."/>
            <person name="Nierman W.C."/>
            <person name="Goldman G.H."/>
        </authorList>
    </citation>
    <scope>IDENTIFICATION</scope>
    <scope>INDUCTION</scope>
    <scope>FUNCTION</scope>
</reference>
<organism>
    <name type="scientific">Aspergillus fumigatus (strain ATCC MYA-4609 / CBS 101355 / FGSC A1100 / Af293)</name>
    <name type="common">Neosartorya fumigata</name>
    <dbReference type="NCBI Taxonomy" id="330879"/>
    <lineage>
        <taxon>Eukaryota</taxon>
        <taxon>Fungi</taxon>
        <taxon>Dikarya</taxon>
        <taxon>Ascomycota</taxon>
        <taxon>Pezizomycotina</taxon>
        <taxon>Eurotiomycetes</taxon>
        <taxon>Eurotiomycetidae</taxon>
        <taxon>Eurotiales</taxon>
        <taxon>Aspergillaceae</taxon>
        <taxon>Aspergillus</taxon>
        <taxon>Aspergillus subgen. Fumigati</taxon>
    </lineage>
</organism>
<proteinExistence type="evidence at transcript level"/>